<organism>
    <name type="scientific">Gluconobacter oxydans (strain 621H)</name>
    <name type="common">Gluconobacter suboxydans</name>
    <dbReference type="NCBI Taxonomy" id="290633"/>
    <lineage>
        <taxon>Bacteria</taxon>
        <taxon>Pseudomonadati</taxon>
        <taxon>Pseudomonadota</taxon>
        <taxon>Alphaproteobacteria</taxon>
        <taxon>Acetobacterales</taxon>
        <taxon>Acetobacteraceae</taxon>
        <taxon>Gluconobacter</taxon>
    </lineage>
</organism>
<accession>Q5FP95</accession>
<protein>
    <recommendedName>
        <fullName evidence="1">Siroheme synthase</fullName>
    </recommendedName>
    <domain>
        <recommendedName>
            <fullName evidence="1">Uroporphyrinogen-III C-methyltransferase</fullName>
            <shortName evidence="1">Urogen III methylase</shortName>
            <ecNumber evidence="1">2.1.1.107</ecNumber>
        </recommendedName>
        <alternativeName>
            <fullName evidence="1">SUMT</fullName>
        </alternativeName>
        <alternativeName>
            <fullName evidence="1">Uroporphyrinogen III methylase</fullName>
            <shortName evidence="1">UROM</shortName>
        </alternativeName>
    </domain>
    <domain>
        <recommendedName>
            <fullName evidence="1">Precorrin-2 dehydrogenase</fullName>
            <ecNumber evidence="1">1.3.1.76</ecNumber>
        </recommendedName>
    </domain>
    <domain>
        <recommendedName>
            <fullName evidence="1">Sirohydrochlorin ferrochelatase</fullName>
            <ecNumber evidence="1">4.99.1.4</ecNumber>
        </recommendedName>
    </domain>
</protein>
<sequence>MNTQPHHSSPDSPQDGGWFPISIRLSGARVLLVGGGEIAVNKGRLLLDHGARIDVLAEKLHPAVQGWVENGRVRHVGERADEAVLRRLLPGCRLVYAATDSRDTNRQVAALADELNIPVCAVDDPGPSSFITPAQVRRGMVRVAVSTGGAAPVLARRLREQIETLLPEGTGRLATYMQSRRAFVSGRYPNVQDRKRIWEDFLDGPGAEAARSGDESRADARLEVLLDGERKSGEVWLVGAGPGDPDLLTLKALHLMQNADSVLYDNLVSPALLDMVRRDAELVFVGKQRDRHALPQDEINREMVRRAQGGERVLRLKGGDPFIFGRGGEEIEALVEAGVAFRLVPGISAANGCAAYSGIPLTHRDCAQACLFVTGHAKADGVLDLPWDDMADRRQTVVIYMGISTLPQLAAGLLGKGLPADWPVAIVERGTQPRQRVFTGTLSTIAQQAAEAQVKSPALVIVGQVVRHRVVSP</sequence>
<keyword id="KW-0169">Cobalamin biosynthesis</keyword>
<keyword id="KW-0456">Lyase</keyword>
<keyword id="KW-0489">Methyltransferase</keyword>
<keyword id="KW-0511">Multifunctional enzyme</keyword>
<keyword id="KW-0520">NAD</keyword>
<keyword id="KW-0560">Oxidoreductase</keyword>
<keyword id="KW-0627">Porphyrin biosynthesis</keyword>
<keyword id="KW-1185">Reference proteome</keyword>
<keyword id="KW-0949">S-adenosyl-L-methionine</keyword>
<keyword id="KW-0808">Transferase</keyword>
<dbReference type="EC" id="2.1.1.107" evidence="1"/>
<dbReference type="EC" id="1.3.1.76" evidence="1"/>
<dbReference type="EC" id="4.99.1.4" evidence="1"/>
<dbReference type="EMBL" id="CP000009">
    <property type="protein sequence ID" value="AAW61801.1"/>
    <property type="molecule type" value="Genomic_DNA"/>
</dbReference>
<dbReference type="RefSeq" id="WP_011253578.1">
    <property type="nucleotide sequence ID" value="NC_006677.1"/>
</dbReference>
<dbReference type="SMR" id="Q5FP95"/>
<dbReference type="STRING" id="290633.GOX2065"/>
<dbReference type="KEGG" id="gox:GOX2065"/>
<dbReference type="eggNOG" id="COG0007">
    <property type="taxonomic scope" value="Bacteria"/>
</dbReference>
<dbReference type="eggNOG" id="COG1648">
    <property type="taxonomic scope" value="Bacteria"/>
</dbReference>
<dbReference type="HOGENOM" id="CLU_011276_2_2_5"/>
<dbReference type="UniPathway" id="UPA00148">
    <property type="reaction ID" value="UER00211"/>
</dbReference>
<dbReference type="UniPathway" id="UPA00148">
    <property type="reaction ID" value="UER00222"/>
</dbReference>
<dbReference type="UniPathway" id="UPA00262">
    <property type="reaction ID" value="UER00211"/>
</dbReference>
<dbReference type="UniPathway" id="UPA00262">
    <property type="reaction ID" value="UER00222"/>
</dbReference>
<dbReference type="UniPathway" id="UPA00262">
    <property type="reaction ID" value="UER00376"/>
</dbReference>
<dbReference type="Proteomes" id="UP000006375">
    <property type="component" value="Chromosome"/>
</dbReference>
<dbReference type="GO" id="GO:0051287">
    <property type="term" value="F:NAD binding"/>
    <property type="evidence" value="ECO:0007669"/>
    <property type="project" value="InterPro"/>
</dbReference>
<dbReference type="GO" id="GO:0043115">
    <property type="term" value="F:precorrin-2 dehydrogenase activity"/>
    <property type="evidence" value="ECO:0007669"/>
    <property type="project" value="UniProtKB-UniRule"/>
</dbReference>
<dbReference type="GO" id="GO:0051266">
    <property type="term" value="F:sirohydrochlorin ferrochelatase activity"/>
    <property type="evidence" value="ECO:0007669"/>
    <property type="project" value="UniProtKB-EC"/>
</dbReference>
<dbReference type="GO" id="GO:0004851">
    <property type="term" value="F:uroporphyrin-III C-methyltransferase activity"/>
    <property type="evidence" value="ECO:0007669"/>
    <property type="project" value="UniProtKB-UniRule"/>
</dbReference>
<dbReference type="GO" id="GO:0009236">
    <property type="term" value="P:cobalamin biosynthetic process"/>
    <property type="evidence" value="ECO:0007669"/>
    <property type="project" value="UniProtKB-UniRule"/>
</dbReference>
<dbReference type="GO" id="GO:0032259">
    <property type="term" value="P:methylation"/>
    <property type="evidence" value="ECO:0007669"/>
    <property type="project" value="UniProtKB-KW"/>
</dbReference>
<dbReference type="GO" id="GO:0019354">
    <property type="term" value="P:siroheme biosynthetic process"/>
    <property type="evidence" value="ECO:0007669"/>
    <property type="project" value="UniProtKB-UniRule"/>
</dbReference>
<dbReference type="CDD" id="cd11642">
    <property type="entry name" value="SUMT"/>
    <property type="match status" value="1"/>
</dbReference>
<dbReference type="FunFam" id="3.30.950.10:FF:000001">
    <property type="entry name" value="Siroheme synthase"/>
    <property type="match status" value="1"/>
</dbReference>
<dbReference type="FunFam" id="3.40.1010.10:FF:000001">
    <property type="entry name" value="Siroheme synthase"/>
    <property type="match status" value="1"/>
</dbReference>
<dbReference type="Gene3D" id="3.40.1010.10">
    <property type="entry name" value="Cobalt-precorrin-4 Transmethylase, Domain 1"/>
    <property type="match status" value="1"/>
</dbReference>
<dbReference type="Gene3D" id="3.30.950.10">
    <property type="entry name" value="Methyltransferase, Cobalt-precorrin-4 Transmethylase, Domain 2"/>
    <property type="match status" value="1"/>
</dbReference>
<dbReference type="Gene3D" id="3.40.50.720">
    <property type="entry name" value="NAD(P)-binding Rossmann-like Domain"/>
    <property type="match status" value="1"/>
</dbReference>
<dbReference type="Gene3D" id="1.10.8.210">
    <property type="entry name" value="Sirohaem synthase, dimerisation domain"/>
    <property type="match status" value="1"/>
</dbReference>
<dbReference type="Gene3D" id="3.30.160.110">
    <property type="entry name" value="Siroheme synthase, domain 2"/>
    <property type="match status" value="1"/>
</dbReference>
<dbReference type="HAMAP" id="MF_01646">
    <property type="entry name" value="Siroheme_synth"/>
    <property type="match status" value="1"/>
</dbReference>
<dbReference type="InterPro" id="IPR000878">
    <property type="entry name" value="4pyrrol_Mease"/>
</dbReference>
<dbReference type="InterPro" id="IPR035996">
    <property type="entry name" value="4pyrrol_Methylase_sf"/>
</dbReference>
<dbReference type="InterPro" id="IPR014777">
    <property type="entry name" value="4pyrrole_Mease_sub1"/>
</dbReference>
<dbReference type="InterPro" id="IPR014776">
    <property type="entry name" value="4pyrrole_Mease_sub2"/>
</dbReference>
<dbReference type="InterPro" id="IPR006366">
    <property type="entry name" value="CobA/CysG_C"/>
</dbReference>
<dbReference type="InterPro" id="IPR036291">
    <property type="entry name" value="NAD(P)-bd_dom_sf"/>
</dbReference>
<dbReference type="InterPro" id="IPR050161">
    <property type="entry name" value="Siro_Cobalamin_biosynth"/>
</dbReference>
<dbReference type="InterPro" id="IPR037115">
    <property type="entry name" value="Sirohaem_synt_dimer_dom_sf"/>
</dbReference>
<dbReference type="InterPro" id="IPR012409">
    <property type="entry name" value="Sirohaem_synth"/>
</dbReference>
<dbReference type="InterPro" id="IPR028281">
    <property type="entry name" value="Sirohaem_synthase_central"/>
</dbReference>
<dbReference type="InterPro" id="IPR019478">
    <property type="entry name" value="Sirohaem_synthase_dimer_dom"/>
</dbReference>
<dbReference type="InterPro" id="IPR006367">
    <property type="entry name" value="Sirohaem_synthase_N"/>
</dbReference>
<dbReference type="InterPro" id="IPR003043">
    <property type="entry name" value="Uropor_MeTrfase_CS"/>
</dbReference>
<dbReference type="NCBIfam" id="TIGR01469">
    <property type="entry name" value="cobA_cysG_Cterm"/>
    <property type="match status" value="1"/>
</dbReference>
<dbReference type="NCBIfam" id="TIGR01470">
    <property type="entry name" value="cysG_Nterm"/>
    <property type="match status" value="1"/>
</dbReference>
<dbReference type="NCBIfam" id="NF004790">
    <property type="entry name" value="PRK06136.1"/>
    <property type="match status" value="1"/>
</dbReference>
<dbReference type="NCBIfam" id="NF007922">
    <property type="entry name" value="PRK10637.1"/>
    <property type="match status" value="1"/>
</dbReference>
<dbReference type="PANTHER" id="PTHR45790:SF3">
    <property type="entry name" value="S-ADENOSYL-L-METHIONINE-DEPENDENT UROPORPHYRINOGEN III METHYLTRANSFERASE, CHLOROPLASTIC"/>
    <property type="match status" value="1"/>
</dbReference>
<dbReference type="PANTHER" id="PTHR45790">
    <property type="entry name" value="SIROHEME SYNTHASE-RELATED"/>
    <property type="match status" value="1"/>
</dbReference>
<dbReference type="Pfam" id="PF10414">
    <property type="entry name" value="CysG_dimeriser"/>
    <property type="match status" value="1"/>
</dbReference>
<dbReference type="Pfam" id="PF13241">
    <property type="entry name" value="NAD_binding_7"/>
    <property type="match status" value="1"/>
</dbReference>
<dbReference type="Pfam" id="PF14824">
    <property type="entry name" value="Sirohm_synth_M"/>
    <property type="match status" value="1"/>
</dbReference>
<dbReference type="Pfam" id="PF00590">
    <property type="entry name" value="TP_methylase"/>
    <property type="match status" value="1"/>
</dbReference>
<dbReference type="PIRSF" id="PIRSF036426">
    <property type="entry name" value="Sirohaem_synth"/>
    <property type="match status" value="1"/>
</dbReference>
<dbReference type="SUPFAM" id="SSF51735">
    <property type="entry name" value="NAD(P)-binding Rossmann-fold domains"/>
    <property type="match status" value="1"/>
</dbReference>
<dbReference type="SUPFAM" id="SSF75615">
    <property type="entry name" value="Siroheme synthase middle domains-like"/>
    <property type="match status" value="1"/>
</dbReference>
<dbReference type="SUPFAM" id="SSF53790">
    <property type="entry name" value="Tetrapyrrole methylase"/>
    <property type="match status" value="1"/>
</dbReference>
<dbReference type="PROSITE" id="PS00839">
    <property type="entry name" value="SUMT_1"/>
    <property type="match status" value="1"/>
</dbReference>
<dbReference type="PROSITE" id="PS00840">
    <property type="entry name" value="SUMT_2"/>
    <property type="match status" value="1"/>
</dbReference>
<feature type="chain" id="PRO_0000330514" description="Siroheme synthase">
    <location>
        <begin position="1"/>
        <end position="473"/>
    </location>
</feature>
<feature type="region of interest" description="Precorrin-2 dehydrogenase /sirohydrochlorin ferrochelatase" evidence="1">
    <location>
        <begin position="1"/>
        <end position="222"/>
    </location>
</feature>
<feature type="region of interest" description="Uroporphyrinogen-III C-methyltransferase" evidence="1">
    <location>
        <begin position="233"/>
        <end position="473"/>
    </location>
</feature>
<feature type="active site" description="Proton acceptor" evidence="1">
    <location>
        <position position="265"/>
    </location>
</feature>
<feature type="active site" description="Proton donor" evidence="1">
    <location>
        <position position="287"/>
    </location>
</feature>
<feature type="binding site" evidence="1">
    <location>
        <begin position="37"/>
        <end position="38"/>
    </location>
    <ligand>
        <name>NAD(+)</name>
        <dbReference type="ChEBI" id="CHEBI:57540"/>
    </ligand>
</feature>
<feature type="binding site" evidence="1">
    <location>
        <begin position="58"/>
        <end position="59"/>
    </location>
    <ligand>
        <name>NAD(+)</name>
        <dbReference type="ChEBI" id="CHEBI:57540"/>
    </ligand>
</feature>
<feature type="binding site" evidence="1">
    <location>
        <position position="242"/>
    </location>
    <ligand>
        <name>S-adenosyl-L-methionine</name>
        <dbReference type="ChEBI" id="CHEBI:59789"/>
    </ligand>
</feature>
<feature type="binding site" evidence="1">
    <location>
        <begin position="318"/>
        <end position="320"/>
    </location>
    <ligand>
        <name>S-adenosyl-L-methionine</name>
        <dbReference type="ChEBI" id="CHEBI:59789"/>
    </ligand>
</feature>
<feature type="binding site" evidence="1">
    <location>
        <position position="323"/>
    </location>
    <ligand>
        <name>S-adenosyl-L-methionine</name>
        <dbReference type="ChEBI" id="CHEBI:59789"/>
    </ligand>
</feature>
<feature type="binding site" evidence="1">
    <location>
        <begin position="348"/>
        <end position="349"/>
    </location>
    <ligand>
        <name>S-adenosyl-L-methionine</name>
        <dbReference type="ChEBI" id="CHEBI:59789"/>
    </ligand>
</feature>
<feature type="binding site" evidence="1">
    <location>
        <position position="401"/>
    </location>
    <ligand>
        <name>S-adenosyl-L-methionine</name>
        <dbReference type="ChEBI" id="CHEBI:59789"/>
    </ligand>
</feature>
<feature type="binding site" evidence="1">
    <location>
        <position position="430"/>
    </location>
    <ligand>
        <name>S-adenosyl-L-methionine</name>
        <dbReference type="ChEBI" id="CHEBI:59789"/>
    </ligand>
</feature>
<reference key="1">
    <citation type="journal article" date="2005" name="Nat. Biotechnol.">
        <title>Complete genome sequence of the acetic acid bacterium Gluconobacter oxydans.</title>
        <authorList>
            <person name="Prust C."/>
            <person name="Hoffmeister M."/>
            <person name="Liesegang H."/>
            <person name="Wiezer A."/>
            <person name="Fricke W.F."/>
            <person name="Ehrenreich A."/>
            <person name="Gottschalk G."/>
            <person name="Deppenmeier U."/>
        </authorList>
    </citation>
    <scope>NUCLEOTIDE SEQUENCE [LARGE SCALE GENOMIC DNA]</scope>
    <source>
        <strain>621H</strain>
    </source>
</reference>
<comment type="function">
    <text evidence="1">Multifunctional enzyme that catalyzes the SAM-dependent methylations of uroporphyrinogen III at position C-2 and C-7 to form precorrin-2 via precorrin-1. Then it catalyzes the NAD-dependent ring dehydrogenation of precorrin-2 to yield sirohydrochlorin. Finally, it catalyzes the ferrochelation of sirohydrochlorin to yield siroheme.</text>
</comment>
<comment type="catalytic activity">
    <reaction evidence="1">
        <text>uroporphyrinogen III + 2 S-adenosyl-L-methionine = precorrin-2 + 2 S-adenosyl-L-homocysteine + H(+)</text>
        <dbReference type="Rhea" id="RHEA:32459"/>
        <dbReference type="ChEBI" id="CHEBI:15378"/>
        <dbReference type="ChEBI" id="CHEBI:57308"/>
        <dbReference type="ChEBI" id="CHEBI:57856"/>
        <dbReference type="ChEBI" id="CHEBI:58827"/>
        <dbReference type="ChEBI" id="CHEBI:59789"/>
        <dbReference type="EC" id="2.1.1.107"/>
    </reaction>
</comment>
<comment type="catalytic activity">
    <reaction evidence="1">
        <text>precorrin-2 + NAD(+) = sirohydrochlorin + NADH + 2 H(+)</text>
        <dbReference type="Rhea" id="RHEA:15613"/>
        <dbReference type="ChEBI" id="CHEBI:15378"/>
        <dbReference type="ChEBI" id="CHEBI:57540"/>
        <dbReference type="ChEBI" id="CHEBI:57945"/>
        <dbReference type="ChEBI" id="CHEBI:58351"/>
        <dbReference type="ChEBI" id="CHEBI:58827"/>
        <dbReference type="EC" id="1.3.1.76"/>
    </reaction>
</comment>
<comment type="catalytic activity">
    <reaction evidence="1">
        <text>siroheme + 2 H(+) = sirohydrochlorin + Fe(2+)</text>
        <dbReference type="Rhea" id="RHEA:24360"/>
        <dbReference type="ChEBI" id="CHEBI:15378"/>
        <dbReference type="ChEBI" id="CHEBI:29033"/>
        <dbReference type="ChEBI" id="CHEBI:58351"/>
        <dbReference type="ChEBI" id="CHEBI:60052"/>
        <dbReference type="EC" id="4.99.1.4"/>
    </reaction>
</comment>
<comment type="pathway">
    <text evidence="1">Cofactor biosynthesis; adenosylcobalamin biosynthesis; precorrin-2 from uroporphyrinogen III: step 1/1.</text>
</comment>
<comment type="pathway">
    <text evidence="1">Cofactor biosynthesis; adenosylcobalamin biosynthesis; sirohydrochlorin from precorrin-2: step 1/1.</text>
</comment>
<comment type="pathway">
    <text evidence="1">Porphyrin-containing compound metabolism; siroheme biosynthesis; precorrin-2 from uroporphyrinogen III: step 1/1.</text>
</comment>
<comment type="pathway">
    <text evidence="1">Porphyrin-containing compound metabolism; siroheme biosynthesis; siroheme from sirohydrochlorin: step 1/1.</text>
</comment>
<comment type="pathway">
    <text evidence="1">Porphyrin-containing compound metabolism; siroheme biosynthesis; sirohydrochlorin from precorrin-2: step 1/1.</text>
</comment>
<comment type="similarity">
    <text evidence="1">In the N-terminal section; belongs to the precorrin-2 dehydrogenase / sirohydrochlorin ferrochelatase family.</text>
</comment>
<comment type="similarity">
    <text evidence="1">In the C-terminal section; belongs to the precorrin methyltransferase family.</text>
</comment>
<evidence type="ECO:0000255" key="1">
    <source>
        <dbReference type="HAMAP-Rule" id="MF_01646"/>
    </source>
</evidence>
<gene>
    <name evidence="1" type="primary">cysG</name>
    <name type="ordered locus">GOX2065</name>
</gene>
<name>CYSG_GLUOX</name>
<proteinExistence type="inferred from homology"/>